<proteinExistence type="inferred from homology"/>
<evidence type="ECO:0000255" key="1">
    <source>
        <dbReference type="HAMAP-Rule" id="MF_01539"/>
    </source>
</evidence>
<sequence length="415" mass="47041">MKAVGLVVEYNPFHNGHRYHAEQAKIKTDSSVAAAVMSGPFLQRGEPAAVSKWARTKMALENGVDIVIELPYIYAVQKAELFARGSVSLLHHLGCSSLFFGSENGRIEPFIEASEAFSRKEDDCSLILKEELKKGLSYPAAASKAFSHIFKGRDMLDLSKPNNILGFHYVRAIHTSGSAMKPYTTARIASQYHDAELPGDNSRIASATSIRKALIEKGTAAARSFLPEASARELEAYRNSYGIWHSTEDYFSYVKYSLSTLSAEELSRIYEVEEGLEHRILRTIRQARSYREMMERLKTKRYTWTRLQRMNTHILTRTKKEDMHRLLKPSSAPYIRLLGMTKKGQAYLSAKKKELTAPLVSKLSSFSHPALDLDILAGRVYSLPINEPERTLFEKQEFSQAPIRYDEDEKRFLNA</sequence>
<dbReference type="EC" id="6.3.4.-" evidence="1"/>
<dbReference type="EMBL" id="CP000560">
    <property type="protein sequence ID" value="ABS73855.1"/>
    <property type="molecule type" value="Genomic_DNA"/>
</dbReference>
<dbReference type="RefSeq" id="WP_012117494.1">
    <property type="nucleotide sequence ID" value="NC_009725.2"/>
</dbReference>
<dbReference type="SMR" id="A7Z4C9"/>
<dbReference type="GeneID" id="93080625"/>
<dbReference type="KEGG" id="bay:RBAM_014920"/>
<dbReference type="HOGENOM" id="CLU_038915_0_2_9"/>
<dbReference type="Proteomes" id="UP000001120">
    <property type="component" value="Chromosome"/>
</dbReference>
<dbReference type="GO" id="GO:0005737">
    <property type="term" value="C:cytoplasm"/>
    <property type="evidence" value="ECO:0007669"/>
    <property type="project" value="UniProtKB-SubCell"/>
</dbReference>
<dbReference type="GO" id="GO:0005524">
    <property type="term" value="F:ATP binding"/>
    <property type="evidence" value="ECO:0007669"/>
    <property type="project" value="UniProtKB-KW"/>
</dbReference>
<dbReference type="GO" id="GO:0016879">
    <property type="term" value="F:ligase activity, forming carbon-nitrogen bonds"/>
    <property type="evidence" value="ECO:0007669"/>
    <property type="project" value="UniProtKB-UniRule"/>
</dbReference>
<dbReference type="GO" id="GO:0000049">
    <property type="term" value="F:tRNA binding"/>
    <property type="evidence" value="ECO:0007669"/>
    <property type="project" value="UniProtKB-KW"/>
</dbReference>
<dbReference type="GO" id="GO:0006400">
    <property type="term" value="P:tRNA modification"/>
    <property type="evidence" value="ECO:0007669"/>
    <property type="project" value="UniProtKB-UniRule"/>
</dbReference>
<dbReference type="Gene3D" id="3.40.50.620">
    <property type="entry name" value="HUPs"/>
    <property type="match status" value="1"/>
</dbReference>
<dbReference type="HAMAP" id="MF_01539">
    <property type="entry name" value="TmcAL"/>
    <property type="match status" value="1"/>
</dbReference>
<dbReference type="InterPro" id="IPR014729">
    <property type="entry name" value="Rossmann-like_a/b/a_fold"/>
</dbReference>
<dbReference type="InterPro" id="IPR008513">
    <property type="entry name" value="tRNA(Met)_cyd_acetate_ligase"/>
</dbReference>
<dbReference type="NCBIfam" id="NF010191">
    <property type="entry name" value="PRK13670.1"/>
    <property type="match status" value="1"/>
</dbReference>
<dbReference type="PANTHER" id="PTHR37825">
    <property type="entry name" value="TRNA(MET) CYTIDINE ACETATE LIGASE"/>
    <property type="match status" value="1"/>
</dbReference>
<dbReference type="PANTHER" id="PTHR37825:SF1">
    <property type="entry name" value="TRNA(MET) CYTIDINE ACETATE LIGASE"/>
    <property type="match status" value="1"/>
</dbReference>
<dbReference type="Pfam" id="PF05636">
    <property type="entry name" value="HIGH_NTase1"/>
    <property type="match status" value="1"/>
</dbReference>
<dbReference type="SUPFAM" id="SSF52374">
    <property type="entry name" value="Nucleotidylyl transferase"/>
    <property type="match status" value="1"/>
</dbReference>
<accession>A7Z4C9</accession>
<comment type="function">
    <text evidence="1">Catalyzes the formation of N(4)-acetylcytidine (ac(4)C) at the wobble position of elongator tRNA(Met), using acetate and ATP as substrates. First activates an acetate ion to form acetyladenylate (Ac-AMP) and then transfers the acetyl group to tRNA to form ac(4)C34.</text>
</comment>
<comment type="catalytic activity">
    <reaction evidence="1">
        <text>cytidine(34) in elongator tRNA(Met) + acetate + ATP = N(4)-acetylcytidine(34) in elongator tRNA(Met) + AMP + diphosphate</text>
        <dbReference type="Rhea" id="RHEA:58144"/>
        <dbReference type="Rhea" id="RHEA-COMP:10693"/>
        <dbReference type="Rhea" id="RHEA-COMP:10694"/>
        <dbReference type="ChEBI" id="CHEBI:30089"/>
        <dbReference type="ChEBI" id="CHEBI:30616"/>
        <dbReference type="ChEBI" id="CHEBI:33019"/>
        <dbReference type="ChEBI" id="CHEBI:74900"/>
        <dbReference type="ChEBI" id="CHEBI:82748"/>
        <dbReference type="ChEBI" id="CHEBI:456215"/>
    </reaction>
</comment>
<comment type="subcellular location">
    <subcellularLocation>
        <location evidence="1">Cytoplasm</location>
    </subcellularLocation>
</comment>
<comment type="similarity">
    <text evidence="1">Belongs to the TmcAL family.</text>
</comment>
<name>TMCAL_BACVZ</name>
<gene>
    <name evidence="1" type="primary">tmcAL</name>
    <name type="ordered locus">RBAM_014920</name>
</gene>
<reference key="1">
    <citation type="journal article" date="2007" name="Nat. Biotechnol.">
        <title>Comparative analysis of the complete genome sequence of the plant growth-promoting bacterium Bacillus amyloliquefaciens FZB42.</title>
        <authorList>
            <person name="Chen X.H."/>
            <person name="Koumoutsi A."/>
            <person name="Scholz R."/>
            <person name="Eisenreich A."/>
            <person name="Schneider K."/>
            <person name="Heinemeyer I."/>
            <person name="Morgenstern B."/>
            <person name="Voss B."/>
            <person name="Hess W.R."/>
            <person name="Reva O."/>
            <person name="Junge H."/>
            <person name="Voigt B."/>
            <person name="Jungblut P.R."/>
            <person name="Vater J."/>
            <person name="Suessmuth R."/>
            <person name="Liesegang H."/>
            <person name="Strittmatter A."/>
            <person name="Gottschalk G."/>
            <person name="Borriss R."/>
        </authorList>
    </citation>
    <scope>NUCLEOTIDE SEQUENCE [LARGE SCALE GENOMIC DNA]</scope>
    <source>
        <strain>DSM 23117 / BGSC 10A6 / LMG 26770 / FZB42</strain>
    </source>
</reference>
<protein>
    <recommendedName>
        <fullName evidence="1">tRNA(Met) cytidine acetate ligase</fullName>
        <ecNumber evidence="1">6.3.4.-</ecNumber>
    </recommendedName>
</protein>
<feature type="chain" id="PRO_1000087619" description="tRNA(Met) cytidine acetate ligase">
    <location>
        <begin position="1"/>
        <end position="415"/>
    </location>
</feature>
<feature type="binding site" evidence="1">
    <location>
        <begin position="7"/>
        <end position="20"/>
    </location>
    <ligand>
        <name>ATP</name>
        <dbReference type="ChEBI" id="CHEBI:30616"/>
    </ligand>
</feature>
<feature type="binding site" evidence="1">
    <location>
        <position position="101"/>
    </location>
    <ligand>
        <name>ATP</name>
        <dbReference type="ChEBI" id="CHEBI:30616"/>
    </ligand>
</feature>
<feature type="binding site" evidence="1">
    <location>
        <position position="162"/>
    </location>
    <ligand>
        <name>ATP</name>
        <dbReference type="ChEBI" id="CHEBI:30616"/>
    </ligand>
</feature>
<feature type="binding site" evidence="1">
    <location>
        <begin position="187"/>
        <end position="188"/>
    </location>
    <ligand>
        <name>ATP</name>
        <dbReference type="ChEBI" id="CHEBI:30616"/>
    </ligand>
</feature>
<keyword id="KW-0067">ATP-binding</keyword>
<keyword id="KW-0963">Cytoplasm</keyword>
<keyword id="KW-0436">Ligase</keyword>
<keyword id="KW-0547">Nucleotide-binding</keyword>
<keyword id="KW-0694">RNA-binding</keyword>
<keyword id="KW-0819">tRNA processing</keyword>
<keyword id="KW-0820">tRNA-binding</keyword>
<organism>
    <name type="scientific">Bacillus velezensis (strain DSM 23117 / BGSC 10A6 / LMG 26770 / FZB42)</name>
    <name type="common">Bacillus amyloliquefaciens subsp. plantarum</name>
    <dbReference type="NCBI Taxonomy" id="326423"/>
    <lineage>
        <taxon>Bacteria</taxon>
        <taxon>Bacillati</taxon>
        <taxon>Bacillota</taxon>
        <taxon>Bacilli</taxon>
        <taxon>Bacillales</taxon>
        <taxon>Bacillaceae</taxon>
        <taxon>Bacillus</taxon>
        <taxon>Bacillus amyloliquefaciens group</taxon>
    </lineage>
</organism>